<comment type="function">
    <text evidence="1">Methylates ribosomal protein L11.</text>
</comment>
<comment type="catalytic activity">
    <reaction evidence="1">
        <text>L-lysyl-[protein] + 3 S-adenosyl-L-methionine = N(6),N(6),N(6)-trimethyl-L-lysyl-[protein] + 3 S-adenosyl-L-homocysteine + 3 H(+)</text>
        <dbReference type="Rhea" id="RHEA:54192"/>
        <dbReference type="Rhea" id="RHEA-COMP:9752"/>
        <dbReference type="Rhea" id="RHEA-COMP:13826"/>
        <dbReference type="ChEBI" id="CHEBI:15378"/>
        <dbReference type="ChEBI" id="CHEBI:29969"/>
        <dbReference type="ChEBI" id="CHEBI:57856"/>
        <dbReference type="ChEBI" id="CHEBI:59789"/>
        <dbReference type="ChEBI" id="CHEBI:61961"/>
    </reaction>
</comment>
<comment type="subcellular location">
    <subcellularLocation>
        <location evidence="1">Cytoplasm</location>
    </subcellularLocation>
</comment>
<comment type="similarity">
    <text evidence="1">Belongs to the methyltransferase superfamily. PrmA family.</text>
</comment>
<name>PRMA_THIDA</name>
<accession>Q3SMB4</accession>
<sequence length="296" mass="31400">MPWQSVRILVDSVQAEPLSDALMEAGALSVSLEDADAGTVDETPLFGEPDHPSAELWPHSIAVVLLEADADVAETLRAAAAQAGVAAPLDYTVETVAEQDWVRLTQSQFDPIPISARLWIVPTWHEAPDSRALNLKLDPGLAFGTGSHPTTRLCLRWLDANLRGGETLLDYGCGSGILAIAAAKLGARRVEGVDIDPQAVSASRDNAALNEVDAHFGLPGELAAGEYDVVVANILTNPLKAMAPLLAGRVRSGGSLVLSGILAEQAEDVMAVYRPWFVFDAPASDEGWVRLVGVKR</sequence>
<protein>
    <recommendedName>
        <fullName evidence="1">Ribosomal protein L11 methyltransferase</fullName>
        <shortName evidence="1">L11 Mtase</shortName>
        <ecNumber evidence="1">2.1.1.-</ecNumber>
    </recommendedName>
</protein>
<proteinExistence type="inferred from homology"/>
<feature type="chain" id="PRO_1000046119" description="Ribosomal protein L11 methyltransferase">
    <location>
        <begin position="1"/>
        <end position="296"/>
    </location>
</feature>
<feature type="binding site" evidence="1">
    <location>
        <position position="151"/>
    </location>
    <ligand>
        <name>S-adenosyl-L-methionine</name>
        <dbReference type="ChEBI" id="CHEBI:59789"/>
    </ligand>
</feature>
<feature type="binding site" evidence="1">
    <location>
        <position position="172"/>
    </location>
    <ligand>
        <name>S-adenosyl-L-methionine</name>
        <dbReference type="ChEBI" id="CHEBI:59789"/>
    </ligand>
</feature>
<feature type="binding site" evidence="1">
    <location>
        <position position="194"/>
    </location>
    <ligand>
        <name>S-adenosyl-L-methionine</name>
        <dbReference type="ChEBI" id="CHEBI:59789"/>
    </ligand>
</feature>
<feature type="binding site" evidence="1">
    <location>
        <position position="233"/>
    </location>
    <ligand>
        <name>S-adenosyl-L-methionine</name>
        <dbReference type="ChEBI" id="CHEBI:59789"/>
    </ligand>
</feature>
<organism>
    <name type="scientific">Thiobacillus denitrificans (strain ATCC 25259 / T1)</name>
    <dbReference type="NCBI Taxonomy" id="292415"/>
    <lineage>
        <taxon>Bacteria</taxon>
        <taxon>Pseudomonadati</taxon>
        <taxon>Pseudomonadota</taxon>
        <taxon>Betaproteobacteria</taxon>
        <taxon>Nitrosomonadales</taxon>
        <taxon>Thiobacillaceae</taxon>
        <taxon>Thiobacillus</taxon>
    </lineage>
</organism>
<reference key="1">
    <citation type="journal article" date="2006" name="J. Bacteriol.">
        <title>The genome sequence of the obligately chemolithoautotrophic, facultatively anaerobic bacterium Thiobacillus denitrificans.</title>
        <authorList>
            <person name="Beller H.R."/>
            <person name="Chain P.S."/>
            <person name="Letain T.E."/>
            <person name="Chakicherla A."/>
            <person name="Larimer F.W."/>
            <person name="Richardson P.M."/>
            <person name="Coleman M.A."/>
            <person name="Wood A.P."/>
            <person name="Kelly D.P."/>
        </authorList>
    </citation>
    <scope>NUCLEOTIDE SEQUENCE [LARGE SCALE GENOMIC DNA]</scope>
    <source>
        <strain>ATCC 25259 / T1</strain>
    </source>
</reference>
<gene>
    <name evidence="1" type="primary">prmA</name>
    <name type="ordered locus">Tbd_0180</name>
</gene>
<dbReference type="EC" id="2.1.1.-" evidence="1"/>
<dbReference type="EMBL" id="CP000116">
    <property type="protein sequence ID" value="AAZ96133.1"/>
    <property type="molecule type" value="Genomic_DNA"/>
</dbReference>
<dbReference type="RefSeq" id="WP_011310693.1">
    <property type="nucleotide sequence ID" value="NC_007404.1"/>
</dbReference>
<dbReference type="SMR" id="Q3SMB4"/>
<dbReference type="STRING" id="292415.Tbd_0180"/>
<dbReference type="KEGG" id="tbd:Tbd_0180"/>
<dbReference type="eggNOG" id="COG2264">
    <property type="taxonomic scope" value="Bacteria"/>
</dbReference>
<dbReference type="HOGENOM" id="CLU_049382_4_1_4"/>
<dbReference type="OrthoDB" id="9785995at2"/>
<dbReference type="Proteomes" id="UP000008291">
    <property type="component" value="Chromosome"/>
</dbReference>
<dbReference type="GO" id="GO:0005829">
    <property type="term" value="C:cytosol"/>
    <property type="evidence" value="ECO:0007669"/>
    <property type="project" value="TreeGrafter"/>
</dbReference>
<dbReference type="GO" id="GO:0016279">
    <property type="term" value="F:protein-lysine N-methyltransferase activity"/>
    <property type="evidence" value="ECO:0007669"/>
    <property type="project" value="TreeGrafter"/>
</dbReference>
<dbReference type="GO" id="GO:0032259">
    <property type="term" value="P:methylation"/>
    <property type="evidence" value="ECO:0007669"/>
    <property type="project" value="UniProtKB-KW"/>
</dbReference>
<dbReference type="CDD" id="cd02440">
    <property type="entry name" value="AdoMet_MTases"/>
    <property type="match status" value="1"/>
</dbReference>
<dbReference type="Gene3D" id="3.40.50.150">
    <property type="entry name" value="Vaccinia Virus protein VP39"/>
    <property type="match status" value="1"/>
</dbReference>
<dbReference type="HAMAP" id="MF_00735">
    <property type="entry name" value="Methyltr_PrmA"/>
    <property type="match status" value="1"/>
</dbReference>
<dbReference type="InterPro" id="IPR050078">
    <property type="entry name" value="Ribosomal_L11_MeTrfase_PrmA"/>
</dbReference>
<dbReference type="InterPro" id="IPR004498">
    <property type="entry name" value="Ribosomal_PrmA_MeTrfase"/>
</dbReference>
<dbReference type="InterPro" id="IPR029063">
    <property type="entry name" value="SAM-dependent_MTases_sf"/>
</dbReference>
<dbReference type="NCBIfam" id="TIGR00406">
    <property type="entry name" value="prmA"/>
    <property type="match status" value="1"/>
</dbReference>
<dbReference type="PANTHER" id="PTHR43648">
    <property type="entry name" value="ELECTRON TRANSFER FLAVOPROTEIN BETA SUBUNIT LYSINE METHYLTRANSFERASE"/>
    <property type="match status" value="1"/>
</dbReference>
<dbReference type="PANTHER" id="PTHR43648:SF1">
    <property type="entry name" value="ELECTRON TRANSFER FLAVOPROTEIN BETA SUBUNIT LYSINE METHYLTRANSFERASE"/>
    <property type="match status" value="1"/>
</dbReference>
<dbReference type="Pfam" id="PF06325">
    <property type="entry name" value="PrmA"/>
    <property type="match status" value="1"/>
</dbReference>
<dbReference type="PIRSF" id="PIRSF000401">
    <property type="entry name" value="RPL11_MTase"/>
    <property type="match status" value="1"/>
</dbReference>
<dbReference type="SUPFAM" id="SSF53335">
    <property type="entry name" value="S-adenosyl-L-methionine-dependent methyltransferases"/>
    <property type="match status" value="1"/>
</dbReference>
<evidence type="ECO:0000255" key="1">
    <source>
        <dbReference type="HAMAP-Rule" id="MF_00735"/>
    </source>
</evidence>
<keyword id="KW-0963">Cytoplasm</keyword>
<keyword id="KW-0489">Methyltransferase</keyword>
<keyword id="KW-1185">Reference proteome</keyword>
<keyword id="KW-0949">S-adenosyl-L-methionine</keyword>
<keyword id="KW-0808">Transferase</keyword>